<sequence length="156" mass="17347">MNLNATLIGQLIAFALFVAFCMKYVWPPLIKAIEERQANIANALSSAEKAKQEQADSKVLAEQEIIKAKEEAQKIIDLATKRRNEILESVQADAEVERQRIIEQGHAEIDSERKRVQEELRQKVAALAVAGAERIVGRSVDTAANNDIIDKLVAEL</sequence>
<gene>
    <name evidence="1" type="primary">atpF</name>
    <name type="ordered locus">HD_0006</name>
</gene>
<protein>
    <recommendedName>
        <fullName evidence="1">ATP synthase subunit b</fullName>
    </recommendedName>
    <alternativeName>
        <fullName evidence="1">ATP synthase F(0) sector subunit b</fullName>
    </alternativeName>
    <alternativeName>
        <fullName evidence="1">ATPase subunit I</fullName>
    </alternativeName>
    <alternativeName>
        <fullName evidence="1">F-type ATPase subunit b</fullName>
        <shortName evidence="1">F-ATPase subunit b</shortName>
    </alternativeName>
</protein>
<dbReference type="EMBL" id="AE017143">
    <property type="protein sequence ID" value="AAP95030.1"/>
    <property type="molecule type" value="Genomic_DNA"/>
</dbReference>
<dbReference type="RefSeq" id="WP_010944084.1">
    <property type="nucleotide sequence ID" value="NC_002940.2"/>
</dbReference>
<dbReference type="SMR" id="Q7VPP4"/>
<dbReference type="STRING" id="233412.HD_0006"/>
<dbReference type="KEGG" id="hdu:HD_0006"/>
<dbReference type="eggNOG" id="COG0711">
    <property type="taxonomic scope" value="Bacteria"/>
</dbReference>
<dbReference type="HOGENOM" id="CLU_079215_4_5_6"/>
<dbReference type="OrthoDB" id="9788020at2"/>
<dbReference type="Proteomes" id="UP000001022">
    <property type="component" value="Chromosome"/>
</dbReference>
<dbReference type="GO" id="GO:0005886">
    <property type="term" value="C:plasma membrane"/>
    <property type="evidence" value="ECO:0007669"/>
    <property type="project" value="UniProtKB-SubCell"/>
</dbReference>
<dbReference type="GO" id="GO:0045259">
    <property type="term" value="C:proton-transporting ATP synthase complex"/>
    <property type="evidence" value="ECO:0007669"/>
    <property type="project" value="UniProtKB-KW"/>
</dbReference>
<dbReference type="GO" id="GO:0046933">
    <property type="term" value="F:proton-transporting ATP synthase activity, rotational mechanism"/>
    <property type="evidence" value="ECO:0007669"/>
    <property type="project" value="UniProtKB-UniRule"/>
</dbReference>
<dbReference type="GO" id="GO:0046961">
    <property type="term" value="F:proton-transporting ATPase activity, rotational mechanism"/>
    <property type="evidence" value="ECO:0007669"/>
    <property type="project" value="TreeGrafter"/>
</dbReference>
<dbReference type="CDD" id="cd06503">
    <property type="entry name" value="ATP-synt_Fo_b"/>
    <property type="match status" value="1"/>
</dbReference>
<dbReference type="FunFam" id="1.20.5.620:FF:000001">
    <property type="entry name" value="ATP synthase subunit b"/>
    <property type="match status" value="1"/>
</dbReference>
<dbReference type="Gene3D" id="1.20.5.620">
    <property type="entry name" value="F1F0 ATP synthase subunit B, membrane domain"/>
    <property type="match status" value="1"/>
</dbReference>
<dbReference type="HAMAP" id="MF_01398">
    <property type="entry name" value="ATP_synth_b_bprime"/>
    <property type="match status" value="1"/>
</dbReference>
<dbReference type="InterPro" id="IPR028987">
    <property type="entry name" value="ATP_synth_B-like_membr_sf"/>
</dbReference>
<dbReference type="InterPro" id="IPR002146">
    <property type="entry name" value="ATP_synth_b/b'su_bac/chlpt"/>
</dbReference>
<dbReference type="InterPro" id="IPR005864">
    <property type="entry name" value="ATP_synth_F0_bsu_bac"/>
</dbReference>
<dbReference type="InterPro" id="IPR050059">
    <property type="entry name" value="ATP_synthase_B_chain"/>
</dbReference>
<dbReference type="NCBIfam" id="TIGR01144">
    <property type="entry name" value="ATP_synt_b"/>
    <property type="match status" value="1"/>
</dbReference>
<dbReference type="NCBIfam" id="NF004411">
    <property type="entry name" value="PRK05759.1-2"/>
    <property type="match status" value="1"/>
</dbReference>
<dbReference type="NCBIfam" id="NF004413">
    <property type="entry name" value="PRK05759.1-4"/>
    <property type="match status" value="1"/>
</dbReference>
<dbReference type="PANTHER" id="PTHR33445:SF1">
    <property type="entry name" value="ATP SYNTHASE SUBUNIT B"/>
    <property type="match status" value="1"/>
</dbReference>
<dbReference type="PANTHER" id="PTHR33445">
    <property type="entry name" value="ATP SYNTHASE SUBUNIT B', CHLOROPLASTIC"/>
    <property type="match status" value="1"/>
</dbReference>
<dbReference type="Pfam" id="PF00430">
    <property type="entry name" value="ATP-synt_B"/>
    <property type="match status" value="1"/>
</dbReference>
<dbReference type="SUPFAM" id="SSF81573">
    <property type="entry name" value="F1F0 ATP synthase subunit B, membrane domain"/>
    <property type="match status" value="1"/>
</dbReference>
<accession>Q7VPP4</accession>
<feature type="chain" id="PRO_0000368511" description="ATP synthase subunit b">
    <location>
        <begin position="1"/>
        <end position="156"/>
    </location>
</feature>
<feature type="transmembrane region" description="Helical" evidence="1">
    <location>
        <begin position="7"/>
        <end position="26"/>
    </location>
</feature>
<name>ATPF_HAEDU</name>
<evidence type="ECO:0000255" key="1">
    <source>
        <dbReference type="HAMAP-Rule" id="MF_01398"/>
    </source>
</evidence>
<keyword id="KW-0066">ATP synthesis</keyword>
<keyword id="KW-0997">Cell inner membrane</keyword>
<keyword id="KW-1003">Cell membrane</keyword>
<keyword id="KW-0138">CF(0)</keyword>
<keyword id="KW-0375">Hydrogen ion transport</keyword>
<keyword id="KW-0406">Ion transport</keyword>
<keyword id="KW-0472">Membrane</keyword>
<keyword id="KW-1185">Reference proteome</keyword>
<keyword id="KW-0812">Transmembrane</keyword>
<keyword id="KW-1133">Transmembrane helix</keyword>
<keyword id="KW-0813">Transport</keyword>
<organism>
    <name type="scientific">Haemophilus ducreyi (strain 35000HP / ATCC 700724)</name>
    <dbReference type="NCBI Taxonomy" id="233412"/>
    <lineage>
        <taxon>Bacteria</taxon>
        <taxon>Pseudomonadati</taxon>
        <taxon>Pseudomonadota</taxon>
        <taxon>Gammaproteobacteria</taxon>
        <taxon>Pasteurellales</taxon>
        <taxon>Pasteurellaceae</taxon>
        <taxon>Haemophilus</taxon>
    </lineage>
</organism>
<comment type="function">
    <text evidence="1">F(1)F(0) ATP synthase produces ATP from ADP in the presence of a proton or sodium gradient. F-type ATPases consist of two structural domains, F(1) containing the extramembraneous catalytic core and F(0) containing the membrane proton channel, linked together by a central stalk and a peripheral stalk. During catalysis, ATP synthesis in the catalytic domain of F(1) is coupled via a rotary mechanism of the central stalk subunits to proton translocation.</text>
</comment>
<comment type="function">
    <text evidence="1">Component of the F(0) channel, it forms part of the peripheral stalk, linking F(1) to F(0).</text>
</comment>
<comment type="subunit">
    <text evidence="1">F-type ATPases have 2 components, F(1) - the catalytic core - and F(0) - the membrane proton channel. F(1) has five subunits: alpha(3), beta(3), gamma(1), delta(1), epsilon(1). F(0) has three main subunits: a(1), b(2) and c(10-14). The alpha and beta chains form an alternating ring which encloses part of the gamma chain. F(1) is attached to F(0) by a central stalk formed by the gamma and epsilon chains, while a peripheral stalk is formed by the delta and b chains.</text>
</comment>
<comment type="subcellular location">
    <subcellularLocation>
        <location evidence="1">Cell inner membrane</location>
        <topology evidence="1">Single-pass membrane protein</topology>
    </subcellularLocation>
</comment>
<comment type="similarity">
    <text evidence="1">Belongs to the ATPase B chain family.</text>
</comment>
<reference key="1">
    <citation type="submission" date="2003-06" db="EMBL/GenBank/DDBJ databases">
        <title>The complete genome sequence of Haemophilus ducreyi.</title>
        <authorList>
            <person name="Munson R.S. Jr."/>
            <person name="Ray W.C."/>
            <person name="Mahairas G."/>
            <person name="Sabo P."/>
            <person name="Mungur R."/>
            <person name="Johnson L."/>
            <person name="Nguyen D."/>
            <person name="Wang J."/>
            <person name="Forst C."/>
            <person name="Hood L."/>
        </authorList>
    </citation>
    <scope>NUCLEOTIDE SEQUENCE [LARGE SCALE GENOMIC DNA]</scope>
    <source>
        <strain>35000HP / ATCC 700724</strain>
    </source>
</reference>
<proteinExistence type="inferred from homology"/>